<evidence type="ECO:0000305" key="1"/>
<proteinExistence type="inferred from homology"/>
<dbReference type="EMBL" id="AY261366">
    <property type="status" value="NOT_ANNOTATED_CDS"/>
    <property type="molecule type" value="Genomic_DNA"/>
</dbReference>
<dbReference type="Proteomes" id="UP000000858">
    <property type="component" value="Segment"/>
</dbReference>
<reference key="1">
    <citation type="submission" date="2003-03" db="EMBL/GenBank/DDBJ databases">
        <title>African swine fever virus genomes.</title>
        <authorList>
            <person name="Kutish G.F."/>
            <person name="Rock D.L."/>
        </authorList>
    </citation>
    <scope>NUCLEOTIDE SEQUENCE [LARGE SCALE GENOMIC DNA]</scope>
</reference>
<organismHost>
    <name type="scientific">Ornithodoros</name>
    <name type="common">relapsing fever ticks</name>
    <dbReference type="NCBI Taxonomy" id="6937"/>
</organismHost>
<organismHost>
    <name type="scientific">Phacochoerus aethiopicus</name>
    <name type="common">Warthog</name>
    <dbReference type="NCBI Taxonomy" id="85517"/>
</organismHost>
<organismHost>
    <name type="scientific">Phacochoerus africanus</name>
    <name type="common">Warthog</name>
    <dbReference type="NCBI Taxonomy" id="41426"/>
</organismHost>
<organismHost>
    <name type="scientific">Potamochoerus larvatus</name>
    <name type="common">Bushpig</name>
    <dbReference type="NCBI Taxonomy" id="273792"/>
</organismHost>
<organismHost>
    <name type="scientific">Sus scrofa</name>
    <name type="common">Pig</name>
    <dbReference type="NCBI Taxonomy" id="9823"/>
</organismHost>
<accession>P0CA35</accession>
<comment type="induction">
    <text evidence="1">Expressed in the late phase of the viral replicative cycle.</text>
</comment>
<comment type="similarity">
    <text evidence="1">Belongs to the asfivirus B125R family.</text>
</comment>
<keyword id="KW-0426">Late protein</keyword>
<gene>
    <name type="ordered locus">War-092</name>
</gene>
<organism>
    <name type="scientific">African swine fever virus (isolate Warthog/Namibia/Wart80/1980)</name>
    <name type="common">ASFV</name>
    <dbReference type="NCBI Taxonomy" id="561444"/>
    <lineage>
        <taxon>Viruses</taxon>
        <taxon>Varidnaviria</taxon>
        <taxon>Bamfordvirae</taxon>
        <taxon>Nucleocytoviricota</taxon>
        <taxon>Pokkesviricetes</taxon>
        <taxon>Asfuvirales</taxon>
        <taxon>Asfarviridae</taxon>
        <taxon>Asfivirus</taxon>
        <taxon>African swine fever virus</taxon>
    </lineage>
</organism>
<name>VF125_ASFWA</name>
<protein>
    <recommendedName>
        <fullName>Uncharacterized protein B125R</fullName>
        <shortName>pB125R</shortName>
    </recommendedName>
</protein>
<feature type="chain" id="PRO_0000373504" description="Uncharacterized protein B125R">
    <location>
        <begin position="1"/>
        <end position="125"/>
    </location>
</feature>
<sequence>MAVYAKDLDNNKELNQKLINDQLKIIDTLLLAEKKNFLVYELPAPFDFSSGDPLASQRDIYYAIIKSLEERGFTVKICMKGDRALLFITWKKIQSIEINKKEEYLRMHFIQDEEKAFYCKFLESR</sequence>